<sequence length="213" mass="24202">MSRVLVPCHVKGSVALQVGDVRTSQGRPGVLVIDVTFPSVAPFELQEITFKNYYTAFLSIRVRQYTSAHTPAKWVTCLRDYCLMPDPHSEEGAQEYVSLFKHQMLCDMARISELRLILRQPSPLWLSFTVEELQIYQQGPKSPSVTFPKWLSHPVPCEQPALLREGLPDPSRVSSEVQQMWALTEMIRASHTSARIGRFDVDGCYDLNLLSYT</sequence>
<dbReference type="EMBL" id="AJ299740">
    <property type="protein sequence ID" value="CAC82516.1"/>
    <property type="molecule type" value="mRNA"/>
</dbReference>
<dbReference type="EMBL" id="AF538150">
    <property type="protein sequence ID" value="AAN52734.1"/>
    <property type="molecule type" value="mRNA"/>
</dbReference>
<dbReference type="EMBL" id="BC005050">
    <property type="protein sequence ID" value="AAH05050.1"/>
    <property type="molecule type" value="mRNA"/>
</dbReference>
<dbReference type="EMBL" id="BC050653">
    <property type="protein sequence ID" value="AAH50653.1"/>
    <property type="molecule type" value="mRNA"/>
</dbReference>
<dbReference type="CCDS" id="CCDS2798.1">
    <molecule id="Q9BSH3-1"/>
</dbReference>
<dbReference type="RefSeq" id="NP_115692.1">
    <molecule id="Q9BSH3-1"/>
    <property type="nucleotide sequence ID" value="NM_032316.3"/>
</dbReference>
<dbReference type="BioGRID" id="124003">
    <property type="interactions" value="22"/>
</dbReference>
<dbReference type="ComplexPortal" id="CPX-2572">
    <property type="entry name" value="Tubulin polyglutamylase complex"/>
</dbReference>
<dbReference type="FunCoup" id="Q9BSH3">
    <property type="interactions" value="1178"/>
</dbReference>
<dbReference type="IntAct" id="Q9BSH3">
    <property type="interactions" value="19"/>
</dbReference>
<dbReference type="STRING" id="9606.ENSP00000273598"/>
<dbReference type="iPTMnet" id="Q9BSH3"/>
<dbReference type="PhosphoSitePlus" id="Q9BSH3"/>
<dbReference type="BioMuta" id="NICN1"/>
<dbReference type="DMDM" id="51701690"/>
<dbReference type="jPOST" id="Q9BSH3"/>
<dbReference type="MassIVE" id="Q9BSH3"/>
<dbReference type="PaxDb" id="9606-ENSP00000273598"/>
<dbReference type="PeptideAtlas" id="Q9BSH3"/>
<dbReference type="ProteomicsDB" id="78891">
    <molecule id="Q9BSH3-1"/>
</dbReference>
<dbReference type="ProteomicsDB" id="78892">
    <molecule id="Q9BSH3-2"/>
</dbReference>
<dbReference type="Pumba" id="Q9BSH3"/>
<dbReference type="Antibodypedia" id="30534">
    <property type="antibodies" value="66 antibodies from 16 providers"/>
</dbReference>
<dbReference type="DNASU" id="84276"/>
<dbReference type="Ensembl" id="ENST00000273598.8">
    <molecule id="Q9BSH3-1"/>
    <property type="protein sequence ID" value="ENSP00000273598.4"/>
    <property type="gene ID" value="ENSG00000145029.15"/>
</dbReference>
<dbReference type="Ensembl" id="ENST00000423832.5">
    <molecule id="Q9BSH3-1"/>
    <property type="protein sequence ID" value="ENSP00000413115.1"/>
    <property type="gene ID" value="ENSG00000145029.15"/>
</dbReference>
<dbReference type="GeneID" id="84276"/>
<dbReference type="KEGG" id="hsa:84276"/>
<dbReference type="MANE-Select" id="ENST00000273598.8">
    <property type="protein sequence ID" value="ENSP00000273598.4"/>
    <property type="RefSeq nucleotide sequence ID" value="NM_032316.3"/>
    <property type="RefSeq protein sequence ID" value="NP_115692.1"/>
</dbReference>
<dbReference type="UCSC" id="uc003cwz.2">
    <molecule id="Q9BSH3-1"/>
    <property type="organism name" value="human"/>
</dbReference>
<dbReference type="AGR" id="HGNC:18317"/>
<dbReference type="CTD" id="84276"/>
<dbReference type="DisGeNET" id="84276"/>
<dbReference type="GeneCards" id="NICN1"/>
<dbReference type="HGNC" id="HGNC:18317">
    <property type="gene designation" value="NICN1"/>
</dbReference>
<dbReference type="HPA" id="ENSG00000145029">
    <property type="expression patterns" value="Low tissue specificity"/>
</dbReference>
<dbReference type="MalaCards" id="NICN1"/>
<dbReference type="MIM" id="611516">
    <property type="type" value="gene"/>
</dbReference>
<dbReference type="neXtProt" id="NX_Q9BSH3"/>
<dbReference type="OpenTargets" id="ENSG00000145029"/>
<dbReference type="OpenTargets" id="ENSG00000283189"/>
<dbReference type="PharmGKB" id="PA31623"/>
<dbReference type="VEuPathDB" id="HostDB:ENSG00000145029"/>
<dbReference type="eggNOG" id="ENOG502QQWA">
    <property type="taxonomic scope" value="Eukaryota"/>
</dbReference>
<dbReference type="GeneTree" id="ENSGT00390000001505"/>
<dbReference type="InParanoid" id="Q9BSH3"/>
<dbReference type="OMA" id="MWVLTEV"/>
<dbReference type="OrthoDB" id="73161at2759"/>
<dbReference type="PAN-GO" id="Q9BSH3">
    <property type="GO annotations" value="1 GO annotation based on evolutionary models"/>
</dbReference>
<dbReference type="PhylomeDB" id="Q9BSH3"/>
<dbReference type="TreeFam" id="TF329753"/>
<dbReference type="PathwayCommons" id="Q9BSH3"/>
<dbReference type="Reactome" id="R-HSA-8955332">
    <property type="pathway name" value="Carboxyterminal post-translational modifications of tubulin"/>
</dbReference>
<dbReference type="SignaLink" id="Q9BSH3"/>
<dbReference type="BioGRID-ORCS" id="84276">
    <property type="hits" value="12 hits in 1153 CRISPR screens"/>
</dbReference>
<dbReference type="ChiTaRS" id="NICN1">
    <property type="organism name" value="human"/>
</dbReference>
<dbReference type="GenomeRNAi" id="84276"/>
<dbReference type="Pharos" id="Q9BSH3">
    <property type="development level" value="Tdark"/>
</dbReference>
<dbReference type="PRO" id="PR:Q9BSH3"/>
<dbReference type="Proteomes" id="UP000005640">
    <property type="component" value="Chromosome 3"/>
</dbReference>
<dbReference type="RNAct" id="Q9BSH3">
    <property type="molecule type" value="protein"/>
</dbReference>
<dbReference type="Bgee" id="ENSG00000145029">
    <property type="expression patterns" value="Expressed in prefrontal cortex and 99 other cell types or tissues"/>
</dbReference>
<dbReference type="ExpressionAtlas" id="Q9BSH3">
    <property type="expression patterns" value="baseline and differential"/>
</dbReference>
<dbReference type="GO" id="GO:0005874">
    <property type="term" value="C:microtubule"/>
    <property type="evidence" value="ECO:0007669"/>
    <property type="project" value="UniProtKB-KW"/>
</dbReference>
<dbReference type="GO" id="GO:0005654">
    <property type="term" value="C:nucleoplasm"/>
    <property type="evidence" value="ECO:0000314"/>
    <property type="project" value="HPA"/>
</dbReference>
<dbReference type="InterPro" id="IPR040235">
    <property type="entry name" value="Nicolin-1"/>
</dbReference>
<dbReference type="PANTHER" id="PTHR31239">
    <property type="entry name" value="NICOLIN 1"/>
    <property type="match status" value="1"/>
</dbReference>
<dbReference type="PANTHER" id="PTHR31239:SF4">
    <property type="entry name" value="NICOLIN-1"/>
    <property type="match status" value="1"/>
</dbReference>
<gene>
    <name type="primary">NICN1</name>
</gene>
<keyword id="KW-0025">Alternative splicing</keyword>
<keyword id="KW-0493">Microtubule</keyword>
<keyword id="KW-0539">Nucleus</keyword>
<keyword id="KW-1267">Proteomics identification</keyword>
<keyword id="KW-1185">Reference proteome</keyword>
<protein>
    <recommendedName>
        <fullName>Nicolin-1</fullName>
    </recommendedName>
    <alternativeName>
        <fullName>NPCEDRG</fullName>
    </alternativeName>
    <alternativeName>
        <fullName>Tubulin polyglutamylase complex subunit 5</fullName>
        <shortName>PGs5</shortName>
    </alternativeName>
</protein>
<comment type="subunit">
    <text evidence="1">Part of the neuronal tubulin polyglutamylase complex which contains TPGS1, TPGS2, TTLL1, LRRC49 and NICN1.</text>
</comment>
<comment type="interaction">
    <interactant intactId="EBI-13324229">
        <id>Q9BSH3</id>
    </interactant>
    <interactant intactId="EBI-3923949">
        <id>Q8N8Y2</id>
        <label>ATP6V0D2</label>
    </interactant>
    <organismsDiffer>false</organismsDiffer>
    <experiments>3</experiments>
</comment>
<comment type="interaction">
    <interactant intactId="EBI-13324229">
        <id>Q9BSH3</id>
    </interactant>
    <interactant intactId="EBI-10271199">
        <id>Q8NI38</id>
        <label>NFKBID</label>
    </interactant>
    <organismsDiffer>false</organismsDiffer>
    <experiments>3</experiments>
</comment>
<comment type="interaction">
    <interactant intactId="EBI-13324229">
        <id>Q9BSH3</id>
    </interactant>
    <interactant intactId="EBI-10181968">
        <id>Q7Z4N8</id>
        <label>P4HA3</label>
    </interactant>
    <organismsDiffer>false</organismsDiffer>
    <experiments>3</experiments>
</comment>
<comment type="interaction">
    <interactant intactId="EBI-13324229">
        <id>Q9BSH3</id>
    </interactant>
    <interactant intactId="EBI-1389308">
        <id>Q7Z3K3</id>
        <label>POGZ</label>
    </interactant>
    <organismsDiffer>false</organismsDiffer>
    <experiments>3</experiments>
</comment>
<comment type="interaction">
    <interactant intactId="EBI-13324229">
        <id>Q9BSH3</id>
    </interactant>
    <interactant intactId="EBI-6257312">
        <id>Q9BVN2</id>
        <label>RUSC1</label>
    </interactant>
    <organismsDiffer>false</organismsDiffer>
    <experiments>3</experiments>
</comment>
<comment type="interaction">
    <interactant intactId="EBI-13324229">
        <id>Q9BSH3</id>
    </interactant>
    <interactant intactId="EBI-752030">
        <id>Q96A09</id>
        <label>TENT5B</label>
    </interactant>
    <organismsDiffer>false</organismsDiffer>
    <experiments>3</experiments>
</comment>
<comment type="interaction">
    <interactant intactId="EBI-13324229">
        <id>Q9BSH3</id>
    </interactant>
    <interactant intactId="EBI-3939165">
        <id>O43711</id>
        <label>TLX3</label>
    </interactant>
    <organismsDiffer>false</organismsDiffer>
    <experiments>3</experiments>
</comment>
<comment type="interaction">
    <interactant intactId="EBI-13324229">
        <id>Q9BSH3</id>
    </interactant>
    <interactant intactId="EBI-11961968">
        <id>P0DI81-3</id>
        <label>TRAPPC2</label>
    </interactant>
    <organismsDiffer>false</organismsDiffer>
    <experiments>3</experiments>
</comment>
<comment type="interaction">
    <interactant intactId="EBI-13324229">
        <id>Q9BSH3</id>
    </interactant>
    <interactant intactId="EBI-2851213">
        <id>Q8N5M4</id>
        <label>TTC9C</label>
    </interactant>
    <organismsDiffer>false</organismsDiffer>
    <experiments>3</experiments>
</comment>
<comment type="interaction">
    <interactant intactId="EBI-13324229">
        <id>Q9BSH3</id>
    </interactant>
    <interactant intactId="EBI-12840750">
        <id>Q15935</id>
        <label>ZNF77</label>
    </interactant>
    <organismsDiffer>false</organismsDiffer>
    <experiments>3</experiments>
</comment>
<comment type="subcellular location">
    <subcellularLocation>
        <location evidence="2">Nucleus</location>
    </subcellularLocation>
</comment>
<comment type="alternative products">
    <event type="alternative splicing"/>
    <isoform>
        <id>Q9BSH3-1</id>
        <name>1</name>
        <sequence type="displayed"/>
    </isoform>
    <isoform>
        <id>Q9BSH3-2</id>
        <name>2</name>
        <sequence type="described" ref="VSP_011420"/>
    </isoform>
</comment>
<comment type="tissue specificity">
    <text evidence="2">High expression level is found in brain, testis, liver and kidney. Weak expression in spleen, leukocytes, small intestine and colon.</text>
</comment>
<accession>Q9BSH3</accession>
<accession>Q8IZQ2</accession>
<name>NICN1_HUMAN</name>
<feature type="chain" id="PRO_0000096814" description="Nicolin-1">
    <location>
        <begin position="1"/>
        <end position="213"/>
    </location>
</feature>
<feature type="splice variant" id="VSP_011420" description="In isoform 2." evidence="3">
    <original>GLPDPSRVSSEVQQMWALTEMIRASHTSARIGRFDVDGCYDLNLLSYT</original>
    <variation>VSPHPR</variation>
    <location>
        <begin position="166"/>
        <end position="213"/>
    </location>
</feature>
<feature type="sequence conflict" description="In Ref. 2; AAN52734." evidence="4" ref="2">
    <location>
        <begin position="45"/>
        <end position="46"/>
    </location>
</feature>
<proteinExistence type="evidence at protein level"/>
<reference key="1">
    <citation type="journal article" date="2002" name="Eur. J. Biochem.">
        <title>Cloning and characterization of the mammalian-specific nicolin 1 gene (NICN1) encoding a nuclear 24 kDa protein.</title>
        <authorList>
            <person name="Backofen B."/>
            <person name="Jacob R."/>
            <person name="Serth K."/>
            <person name="Gossler A."/>
            <person name="Naim H.Y."/>
            <person name="Leeb T."/>
        </authorList>
    </citation>
    <scope>NUCLEOTIDE SEQUENCE [MRNA] (ISOFORM 1)</scope>
    <scope>TISSUE SPECIFICITY</scope>
    <scope>SUBCELLULAR LOCATION</scope>
</reference>
<reference key="2">
    <citation type="submission" date="2002-08" db="EMBL/GenBank/DDBJ databases">
        <title>Cloning a novel gene, NPCEDRG, from the human chromosome 3p21.</title>
        <authorList>
            <person name="Xiusheng H."/>
            <person name="Zhuchu C."/>
            <person name="Fang T."/>
            <person name="Youjun L."/>
            <person name="Zhiqiang X."/>
            <person name="Zhimin H."/>
            <person name="Jianhua Z."/>
        </authorList>
    </citation>
    <scope>NUCLEOTIDE SEQUENCE [MRNA] (ISOFORM 2)</scope>
    <source>
        <tissue>Nasopharyngeal carcinoma</tissue>
    </source>
</reference>
<reference key="3">
    <citation type="journal article" date="2004" name="Genome Res.">
        <title>The status, quality, and expansion of the NIH full-length cDNA project: the Mammalian Gene Collection (MGC).</title>
        <authorList>
            <consortium name="The MGC Project Team"/>
        </authorList>
    </citation>
    <scope>NUCLEOTIDE SEQUENCE [LARGE SCALE MRNA] (ISOFORM 1)</scope>
    <source>
        <tissue>Lung</tissue>
        <tissue>Testis</tissue>
    </source>
</reference>
<organism>
    <name type="scientific">Homo sapiens</name>
    <name type="common">Human</name>
    <dbReference type="NCBI Taxonomy" id="9606"/>
    <lineage>
        <taxon>Eukaryota</taxon>
        <taxon>Metazoa</taxon>
        <taxon>Chordata</taxon>
        <taxon>Craniata</taxon>
        <taxon>Vertebrata</taxon>
        <taxon>Euteleostomi</taxon>
        <taxon>Mammalia</taxon>
        <taxon>Eutheria</taxon>
        <taxon>Euarchontoglires</taxon>
        <taxon>Primates</taxon>
        <taxon>Haplorrhini</taxon>
        <taxon>Catarrhini</taxon>
        <taxon>Hominidae</taxon>
        <taxon>Homo</taxon>
    </lineage>
</organism>
<evidence type="ECO:0000250" key="1"/>
<evidence type="ECO:0000269" key="2">
    <source>
    </source>
</evidence>
<evidence type="ECO:0000303" key="3">
    <source ref="2"/>
</evidence>
<evidence type="ECO:0000305" key="4"/>